<reference key="1">
    <citation type="journal article" date="2008" name="J. Bacteriol.">
        <title>Genome sequence of a nephritogenic and highly transformable M49 strain of Streptococcus pyogenes.</title>
        <authorList>
            <person name="McShan W.M."/>
            <person name="Ferretti J.J."/>
            <person name="Karasawa T."/>
            <person name="Suvorov A.N."/>
            <person name="Lin S."/>
            <person name="Qin B."/>
            <person name="Jia H."/>
            <person name="Kenton S."/>
            <person name="Najar F."/>
            <person name="Wu H."/>
            <person name="Scott J."/>
            <person name="Roe B.A."/>
            <person name="Savic D.J."/>
        </authorList>
    </citation>
    <scope>NUCLEOTIDE SEQUENCE [LARGE SCALE GENOMIC DNA]</scope>
    <source>
        <strain>NZ131</strain>
    </source>
</reference>
<comment type="function">
    <text evidence="1">Component of the acetyl coenzyme A carboxylase (ACC) complex. Biotin carboxylase (BC) catalyzes the carboxylation of biotin on its carrier protein (BCCP) and then the CO(2) group is transferred by the transcarboxylase to acetyl-CoA to form malonyl-CoA.</text>
</comment>
<comment type="catalytic activity">
    <reaction evidence="1">
        <text>N(6)-carboxybiotinyl-L-lysyl-[protein] + acetyl-CoA = N(6)-biotinyl-L-lysyl-[protein] + malonyl-CoA</text>
        <dbReference type="Rhea" id="RHEA:54728"/>
        <dbReference type="Rhea" id="RHEA-COMP:10505"/>
        <dbReference type="Rhea" id="RHEA-COMP:10506"/>
        <dbReference type="ChEBI" id="CHEBI:57288"/>
        <dbReference type="ChEBI" id="CHEBI:57384"/>
        <dbReference type="ChEBI" id="CHEBI:83144"/>
        <dbReference type="ChEBI" id="CHEBI:83145"/>
        <dbReference type="EC" id="2.1.3.15"/>
    </reaction>
</comment>
<comment type="cofactor">
    <cofactor evidence="1">
        <name>Zn(2+)</name>
        <dbReference type="ChEBI" id="CHEBI:29105"/>
    </cofactor>
    <text evidence="1">Binds 1 zinc ion per subunit.</text>
</comment>
<comment type="pathway">
    <text evidence="1">Lipid metabolism; malonyl-CoA biosynthesis; malonyl-CoA from acetyl-CoA: step 1/1.</text>
</comment>
<comment type="subunit">
    <text evidence="1">Acetyl-CoA carboxylase is a heterohexamer composed of biotin carboxyl carrier protein (AccB), biotin carboxylase (AccC) and two subunits each of ACCase subunit alpha (AccA) and ACCase subunit beta (AccD).</text>
</comment>
<comment type="subcellular location">
    <subcellularLocation>
        <location evidence="1">Cytoplasm</location>
    </subcellularLocation>
</comment>
<comment type="similarity">
    <text evidence="1">Belongs to the AccD/PCCB family.</text>
</comment>
<gene>
    <name evidence="1" type="primary">accD</name>
    <name type="ordered locus">Spy49_1360c</name>
</gene>
<evidence type="ECO:0000255" key="1">
    <source>
        <dbReference type="HAMAP-Rule" id="MF_01395"/>
    </source>
</evidence>
<evidence type="ECO:0000255" key="2">
    <source>
        <dbReference type="PROSITE-ProRule" id="PRU01136"/>
    </source>
</evidence>
<name>ACCD_STRPZ</name>
<sequence>MALFRKKDKYIRITPNNSLKGSVSHNVPEVPDELFAKCPACKHMIYKKDLGLAKICPTCSYNFRISAQERLTLTVDEGSFQELFTSIETKDPLRFPGYQEKLQKAKEITGLHEAVLTGKAMVKGQQIALAIMDSHFIMASMGTVVGEKITRLFELAIEENLPVVIFTASGGARMQEGIMSLMQMAKVSAAVKRHSNAGLFYLTILTDPTTGGVTASFAMEGDIILAEPQSLVGFAGRRVIETTVRENLPDNFQKAEFLQDHGFVDAIVKRTELRDKIAHLVSFHGGGQ</sequence>
<protein>
    <recommendedName>
        <fullName evidence="1">Acetyl-coenzyme A carboxylase carboxyl transferase subunit beta</fullName>
        <shortName evidence="1">ACCase subunit beta</shortName>
        <shortName evidence="1">Acetyl-CoA carboxylase carboxyltransferase subunit beta</shortName>
        <ecNumber evidence="1">2.1.3.15</ecNumber>
    </recommendedName>
</protein>
<organism>
    <name type="scientific">Streptococcus pyogenes serotype M49 (strain NZ131)</name>
    <dbReference type="NCBI Taxonomy" id="471876"/>
    <lineage>
        <taxon>Bacteria</taxon>
        <taxon>Bacillati</taxon>
        <taxon>Bacillota</taxon>
        <taxon>Bacilli</taxon>
        <taxon>Lactobacillales</taxon>
        <taxon>Streptococcaceae</taxon>
        <taxon>Streptococcus</taxon>
    </lineage>
</organism>
<proteinExistence type="inferred from homology"/>
<dbReference type="EC" id="2.1.3.15" evidence="1"/>
<dbReference type="EMBL" id="CP000829">
    <property type="protein sequence ID" value="ACI61638.1"/>
    <property type="molecule type" value="Genomic_DNA"/>
</dbReference>
<dbReference type="SMR" id="B5XHX6"/>
<dbReference type="KEGG" id="soz:Spy49_1360c"/>
<dbReference type="HOGENOM" id="CLU_015486_1_1_9"/>
<dbReference type="UniPathway" id="UPA00655">
    <property type="reaction ID" value="UER00711"/>
</dbReference>
<dbReference type="Proteomes" id="UP000001039">
    <property type="component" value="Chromosome"/>
</dbReference>
<dbReference type="GO" id="GO:0009317">
    <property type="term" value="C:acetyl-CoA carboxylase complex"/>
    <property type="evidence" value="ECO:0007669"/>
    <property type="project" value="InterPro"/>
</dbReference>
<dbReference type="GO" id="GO:0003989">
    <property type="term" value="F:acetyl-CoA carboxylase activity"/>
    <property type="evidence" value="ECO:0007669"/>
    <property type="project" value="InterPro"/>
</dbReference>
<dbReference type="GO" id="GO:0005524">
    <property type="term" value="F:ATP binding"/>
    <property type="evidence" value="ECO:0007669"/>
    <property type="project" value="UniProtKB-KW"/>
</dbReference>
<dbReference type="GO" id="GO:0016743">
    <property type="term" value="F:carboxyl- or carbamoyltransferase activity"/>
    <property type="evidence" value="ECO:0007669"/>
    <property type="project" value="UniProtKB-UniRule"/>
</dbReference>
<dbReference type="GO" id="GO:0008270">
    <property type="term" value="F:zinc ion binding"/>
    <property type="evidence" value="ECO:0007669"/>
    <property type="project" value="UniProtKB-UniRule"/>
</dbReference>
<dbReference type="GO" id="GO:0006633">
    <property type="term" value="P:fatty acid biosynthetic process"/>
    <property type="evidence" value="ECO:0007669"/>
    <property type="project" value="UniProtKB-KW"/>
</dbReference>
<dbReference type="GO" id="GO:2001295">
    <property type="term" value="P:malonyl-CoA biosynthetic process"/>
    <property type="evidence" value="ECO:0007669"/>
    <property type="project" value="UniProtKB-UniRule"/>
</dbReference>
<dbReference type="Gene3D" id="3.90.226.10">
    <property type="entry name" value="2-enoyl-CoA Hydratase, Chain A, domain 1"/>
    <property type="match status" value="1"/>
</dbReference>
<dbReference type="HAMAP" id="MF_01395">
    <property type="entry name" value="AcetylCoA_CT_beta"/>
    <property type="match status" value="1"/>
</dbReference>
<dbReference type="InterPro" id="IPR034733">
    <property type="entry name" value="AcCoA_carboxyl_beta"/>
</dbReference>
<dbReference type="InterPro" id="IPR000438">
    <property type="entry name" value="Acetyl_CoA_COase_Trfase_b_su"/>
</dbReference>
<dbReference type="InterPro" id="IPR029045">
    <property type="entry name" value="ClpP/crotonase-like_dom_sf"/>
</dbReference>
<dbReference type="InterPro" id="IPR011762">
    <property type="entry name" value="COA_CT_N"/>
</dbReference>
<dbReference type="NCBIfam" id="TIGR00515">
    <property type="entry name" value="accD"/>
    <property type="match status" value="1"/>
</dbReference>
<dbReference type="PANTHER" id="PTHR42995">
    <property type="entry name" value="ACETYL-COENZYME A CARBOXYLASE CARBOXYL TRANSFERASE SUBUNIT BETA, CHLOROPLASTIC"/>
    <property type="match status" value="1"/>
</dbReference>
<dbReference type="PANTHER" id="PTHR42995:SF5">
    <property type="entry name" value="ACETYL-COENZYME A CARBOXYLASE CARBOXYL TRANSFERASE SUBUNIT BETA, CHLOROPLASTIC"/>
    <property type="match status" value="1"/>
</dbReference>
<dbReference type="Pfam" id="PF01039">
    <property type="entry name" value="Carboxyl_trans"/>
    <property type="match status" value="1"/>
</dbReference>
<dbReference type="PRINTS" id="PR01070">
    <property type="entry name" value="ACCCTRFRASEB"/>
</dbReference>
<dbReference type="SUPFAM" id="SSF52096">
    <property type="entry name" value="ClpP/crotonase"/>
    <property type="match status" value="1"/>
</dbReference>
<dbReference type="PROSITE" id="PS50980">
    <property type="entry name" value="COA_CT_NTER"/>
    <property type="match status" value="1"/>
</dbReference>
<accession>B5XHX6</accession>
<keyword id="KW-0067">ATP-binding</keyword>
<keyword id="KW-0963">Cytoplasm</keyword>
<keyword id="KW-0275">Fatty acid biosynthesis</keyword>
<keyword id="KW-0276">Fatty acid metabolism</keyword>
<keyword id="KW-0444">Lipid biosynthesis</keyword>
<keyword id="KW-0443">Lipid metabolism</keyword>
<keyword id="KW-0479">Metal-binding</keyword>
<keyword id="KW-0547">Nucleotide-binding</keyword>
<keyword id="KW-0808">Transferase</keyword>
<keyword id="KW-0862">Zinc</keyword>
<keyword id="KW-0863">Zinc-finger</keyword>
<feature type="chain" id="PRO_0000389881" description="Acetyl-coenzyme A carboxylase carboxyl transferase subunit beta">
    <location>
        <begin position="1"/>
        <end position="288"/>
    </location>
</feature>
<feature type="domain" description="CoA carboxyltransferase N-terminal" evidence="2">
    <location>
        <begin position="34"/>
        <end position="288"/>
    </location>
</feature>
<feature type="zinc finger region" description="C4-type" evidence="1">
    <location>
        <begin position="38"/>
        <end position="59"/>
    </location>
</feature>
<feature type="binding site" evidence="1">
    <location>
        <position position="38"/>
    </location>
    <ligand>
        <name>Zn(2+)</name>
        <dbReference type="ChEBI" id="CHEBI:29105"/>
    </ligand>
</feature>
<feature type="binding site" evidence="1">
    <location>
        <position position="41"/>
    </location>
    <ligand>
        <name>Zn(2+)</name>
        <dbReference type="ChEBI" id="CHEBI:29105"/>
    </ligand>
</feature>
<feature type="binding site" evidence="1">
    <location>
        <position position="56"/>
    </location>
    <ligand>
        <name>Zn(2+)</name>
        <dbReference type="ChEBI" id="CHEBI:29105"/>
    </ligand>
</feature>
<feature type="binding site" evidence="1">
    <location>
        <position position="59"/>
    </location>
    <ligand>
        <name>Zn(2+)</name>
        <dbReference type="ChEBI" id="CHEBI:29105"/>
    </ligand>
</feature>